<comment type="function">
    <text evidence="1">Cytoskeletal protein that is involved in cell-shape control through regulation of the length of the long axis.</text>
</comment>
<comment type="subcellular location">
    <subcellularLocation>
        <location evidence="1">Cell inner membrane</location>
        <topology evidence="1">Single-pass type II membrane protein</topology>
    </subcellularLocation>
    <text evidence="1">Forms helical filaments along the long axis of the cell.</text>
</comment>
<comment type="domain">
    <text evidence="1">The helix-turn-helix (HTH) motif in the cytoplasmic domain of the N-terminus is involved in the formation of spirals to maintain the rigid rod shape. As this protein is anchored in the cytoplasmic membrane, the HTH motif may contribute to protein-protein interactions to form the RodZ helix, which is localized beneath the cytoplasmic membrane. The C-terminal domain may be critical for determination of the rod shape by probably interacting with enzymes required for synthesis of the peptidoglycan layer, including PBPs in the periplasm.</text>
</comment>
<comment type="similarity">
    <text evidence="1">Belongs to the RodZ family.</text>
</comment>
<dbReference type="EMBL" id="CP001144">
    <property type="protein sequence ID" value="ACH77872.1"/>
    <property type="molecule type" value="Genomic_DNA"/>
</dbReference>
<dbReference type="RefSeq" id="WP_001090894.1">
    <property type="nucleotide sequence ID" value="NC_011205.1"/>
</dbReference>
<dbReference type="SMR" id="B5FR64"/>
<dbReference type="KEGG" id="sed:SeD_A2893"/>
<dbReference type="HOGENOM" id="CLU_047530_3_1_6"/>
<dbReference type="Proteomes" id="UP000008322">
    <property type="component" value="Chromosome"/>
</dbReference>
<dbReference type="GO" id="GO:0005886">
    <property type="term" value="C:plasma membrane"/>
    <property type="evidence" value="ECO:0007669"/>
    <property type="project" value="UniProtKB-SubCell"/>
</dbReference>
<dbReference type="GO" id="GO:0003677">
    <property type="term" value="F:DNA binding"/>
    <property type="evidence" value="ECO:0007669"/>
    <property type="project" value="UniProtKB-KW"/>
</dbReference>
<dbReference type="GO" id="GO:0008360">
    <property type="term" value="P:regulation of cell shape"/>
    <property type="evidence" value="ECO:0007669"/>
    <property type="project" value="UniProtKB-UniRule"/>
</dbReference>
<dbReference type="CDD" id="cd00093">
    <property type="entry name" value="HTH_XRE"/>
    <property type="match status" value="1"/>
</dbReference>
<dbReference type="FunFam" id="1.10.260.40:FF:000014">
    <property type="entry name" value="Cytoskeleton protein RodZ"/>
    <property type="match status" value="1"/>
</dbReference>
<dbReference type="Gene3D" id="1.10.260.40">
    <property type="entry name" value="lambda repressor-like DNA-binding domains"/>
    <property type="match status" value="1"/>
</dbReference>
<dbReference type="HAMAP" id="MF_02017">
    <property type="entry name" value="RodZ"/>
    <property type="match status" value="1"/>
</dbReference>
<dbReference type="InterPro" id="IPR050400">
    <property type="entry name" value="Bact_Cytoskel_RodZ"/>
</dbReference>
<dbReference type="InterPro" id="IPR001387">
    <property type="entry name" value="Cro/C1-type_HTH"/>
</dbReference>
<dbReference type="InterPro" id="IPR010982">
    <property type="entry name" value="Lambda_DNA-bd_dom_sf"/>
</dbReference>
<dbReference type="InterPro" id="IPR023690">
    <property type="entry name" value="RodZ"/>
</dbReference>
<dbReference type="InterPro" id="IPR025194">
    <property type="entry name" value="RodZ-like_C"/>
</dbReference>
<dbReference type="NCBIfam" id="NF008109">
    <property type="entry name" value="PRK10856.1"/>
    <property type="match status" value="1"/>
</dbReference>
<dbReference type="PANTHER" id="PTHR34475">
    <property type="match status" value="1"/>
</dbReference>
<dbReference type="PANTHER" id="PTHR34475:SF1">
    <property type="entry name" value="CYTOSKELETON PROTEIN RODZ"/>
    <property type="match status" value="1"/>
</dbReference>
<dbReference type="Pfam" id="PF13413">
    <property type="entry name" value="HTH_25"/>
    <property type="match status" value="1"/>
</dbReference>
<dbReference type="Pfam" id="PF13464">
    <property type="entry name" value="RodZ_C"/>
    <property type="match status" value="1"/>
</dbReference>
<dbReference type="SMART" id="SM00530">
    <property type="entry name" value="HTH_XRE"/>
    <property type="match status" value="1"/>
</dbReference>
<dbReference type="SUPFAM" id="SSF47413">
    <property type="entry name" value="lambda repressor-like DNA-binding domains"/>
    <property type="match status" value="1"/>
</dbReference>
<dbReference type="PROSITE" id="PS50943">
    <property type="entry name" value="HTH_CROC1"/>
    <property type="match status" value="1"/>
</dbReference>
<sequence length="334" mass="35687">MNTEATHDQNEAQTTGVRLRNAREQLGLSQQAVAERLCLKVSTVRDIEEDKAPSDLASTFLRGYIRSYARLVHVPEEELLPGLEKQAPLRAAKVAPMQSFSLGKRRKKRDGWLMSFTWLVLFVVVGLTGAWWWQNHKAQQEEITTMADQSTAELNADKDSGQSVPLDTGAVTSQDTTPAQTAPAPATPVDSTAATQTPAPTAAATQNTVVAPSQANVDTAATSAAPAATETPSALPTSQAGVAAPAADPNALVMNFTADCWLEVTDATGKKLFSGMQRKDGNLNLTGQAPYKLKIGAPAAVQIQYQGKPVDLSRFIRTNQVARLTLNAEPTPAQ</sequence>
<feature type="chain" id="PRO_0000361850" description="Cytoskeleton protein RodZ">
    <location>
        <begin position="1"/>
        <end position="334"/>
    </location>
</feature>
<feature type="topological domain" description="Cytoplasmic" evidence="1">
    <location>
        <begin position="1"/>
        <end position="111"/>
    </location>
</feature>
<feature type="transmembrane region" description="Helical; Signal-anchor for type II membrane protein" evidence="1">
    <location>
        <begin position="112"/>
        <end position="132"/>
    </location>
</feature>
<feature type="topological domain" description="Periplasmic" evidence="1">
    <location>
        <begin position="133"/>
        <end position="334"/>
    </location>
</feature>
<feature type="domain" description="HTH cro/C1-type" evidence="1">
    <location>
        <begin position="19"/>
        <end position="71"/>
    </location>
</feature>
<feature type="DNA-binding region" description="H-T-H motif" evidence="1">
    <location>
        <begin position="30"/>
        <end position="49"/>
    </location>
</feature>
<feature type="region of interest" description="Disordered" evidence="2">
    <location>
        <begin position="155"/>
        <end position="241"/>
    </location>
</feature>
<feature type="compositionally biased region" description="Polar residues" evidence="2">
    <location>
        <begin position="161"/>
        <end position="175"/>
    </location>
</feature>
<feature type="compositionally biased region" description="Low complexity" evidence="2">
    <location>
        <begin position="176"/>
        <end position="211"/>
    </location>
</feature>
<feature type="compositionally biased region" description="Low complexity" evidence="2">
    <location>
        <begin position="219"/>
        <end position="241"/>
    </location>
</feature>
<accession>B5FR64</accession>
<gene>
    <name evidence="1" type="primary">rodZ</name>
    <name type="ordered locus">SeD_A2893</name>
</gene>
<proteinExistence type="inferred from homology"/>
<keyword id="KW-0997">Cell inner membrane</keyword>
<keyword id="KW-1003">Cell membrane</keyword>
<keyword id="KW-0133">Cell shape</keyword>
<keyword id="KW-0238">DNA-binding</keyword>
<keyword id="KW-0472">Membrane</keyword>
<keyword id="KW-0735">Signal-anchor</keyword>
<keyword id="KW-0812">Transmembrane</keyword>
<keyword id="KW-1133">Transmembrane helix</keyword>
<evidence type="ECO:0000255" key="1">
    <source>
        <dbReference type="HAMAP-Rule" id="MF_02017"/>
    </source>
</evidence>
<evidence type="ECO:0000256" key="2">
    <source>
        <dbReference type="SAM" id="MobiDB-lite"/>
    </source>
</evidence>
<reference key="1">
    <citation type="journal article" date="2011" name="J. Bacteriol.">
        <title>Comparative genomics of 28 Salmonella enterica isolates: evidence for CRISPR-mediated adaptive sublineage evolution.</title>
        <authorList>
            <person name="Fricke W.F."/>
            <person name="Mammel M.K."/>
            <person name="McDermott P.F."/>
            <person name="Tartera C."/>
            <person name="White D.G."/>
            <person name="Leclerc J.E."/>
            <person name="Ravel J."/>
            <person name="Cebula T.A."/>
        </authorList>
    </citation>
    <scope>NUCLEOTIDE SEQUENCE [LARGE SCALE GENOMIC DNA]</scope>
    <source>
        <strain>CT_02021853</strain>
    </source>
</reference>
<name>RODZ_SALDC</name>
<organism>
    <name type="scientific">Salmonella dublin (strain CT_02021853)</name>
    <dbReference type="NCBI Taxonomy" id="439851"/>
    <lineage>
        <taxon>Bacteria</taxon>
        <taxon>Pseudomonadati</taxon>
        <taxon>Pseudomonadota</taxon>
        <taxon>Gammaproteobacteria</taxon>
        <taxon>Enterobacterales</taxon>
        <taxon>Enterobacteriaceae</taxon>
        <taxon>Salmonella</taxon>
    </lineage>
</organism>
<protein>
    <recommendedName>
        <fullName evidence="1">Cytoskeleton protein RodZ</fullName>
    </recommendedName>
</protein>